<name>BICL2_DANRE</name>
<dbReference type="EMBL" id="BC125915">
    <property type="protein sequence ID" value="AAI25916.1"/>
    <property type="molecule type" value="mRNA"/>
</dbReference>
<dbReference type="RefSeq" id="NP_001180520.1">
    <property type="nucleotide sequence ID" value="NM_001193591.1"/>
</dbReference>
<dbReference type="SMR" id="A0JMK8"/>
<dbReference type="FunCoup" id="A0JMK8">
    <property type="interactions" value="1"/>
</dbReference>
<dbReference type="STRING" id="7955.ENSDARP00000068757"/>
<dbReference type="PaxDb" id="7955-ENSDARP00000108853"/>
<dbReference type="Ensembl" id="ENSDART00000124568">
    <property type="protein sequence ID" value="ENSDARP00000108853"/>
    <property type="gene ID" value="ENSDARG00000052427"/>
</dbReference>
<dbReference type="GeneID" id="777640"/>
<dbReference type="KEGG" id="dre:777640"/>
<dbReference type="AGR" id="ZFIN:ZDB-GENE-061103-154"/>
<dbReference type="CTD" id="146439"/>
<dbReference type="ZFIN" id="ZDB-GENE-061103-154">
    <property type="gene designation" value="bicdl2"/>
</dbReference>
<dbReference type="eggNOG" id="ENOG502RC22">
    <property type="taxonomic scope" value="Eukaryota"/>
</dbReference>
<dbReference type="HOGENOM" id="CLU_029068_2_1_1"/>
<dbReference type="InParanoid" id="A0JMK8"/>
<dbReference type="OrthoDB" id="9451547at2759"/>
<dbReference type="PhylomeDB" id="A0JMK8"/>
<dbReference type="PRO" id="PR:A0JMK8"/>
<dbReference type="Proteomes" id="UP000000437">
    <property type="component" value="Chromosome 5"/>
</dbReference>
<dbReference type="Bgee" id="ENSDARG00000052427">
    <property type="expression patterns" value="Expressed in pharyngeal gill and 19 other cell types or tissues"/>
</dbReference>
<dbReference type="ExpressionAtlas" id="A0JMK8">
    <property type="expression patterns" value="baseline and differential"/>
</dbReference>
<dbReference type="GO" id="GO:0005737">
    <property type="term" value="C:cytoplasm"/>
    <property type="evidence" value="ECO:0007669"/>
    <property type="project" value="GOC"/>
</dbReference>
<dbReference type="GO" id="GO:0055107">
    <property type="term" value="P:Golgi to secretory granule transport"/>
    <property type="evidence" value="ECO:0000318"/>
    <property type="project" value="GO_Central"/>
</dbReference>
<dbReference type="GO" id="GO:0047496">
    <property type="term" value="P:vesicle transport along microtubule"/>
    <property type="evidence" value="ECO:0000318"/>
    <property type="project" value="GO_Central"/>
</dbReference>
<dbReference type="InterPro" id="IPR051149">
    <property type="entry name" value="Spindly/BICDR_Dynein_Adapter"/>
</dbReference>
<dbReference type="PANTHER" id="PTHR32123">
    <property type="entry name" value="BICD FAMILY-LIKE CARGO ADAPTER"/>
    <property type="match status" value="1"/>
</dbReference>
<dbReference type="PANTHER" id="PTHR32123:SF11">
    <property type="entry name" value="BICD FAMILY-LIKE CARGO ADAPTER 2-RELATED"/>
    <property type="match status" value="1"/>
</dbReference>
<protein>
    <recommendedName>
        <fullName>BICD family-like cargo adapter 2</fullName>
    </recommendedName>
    <alternativeName>
        <fullName>Bicaudal D-related protein 2</fullName>
        <shortName>BICD-related protein 2</shortName>
        <shortName>BICDR-2</shortName>
    </alternativeName>
    <alternativeName>
        <fullName>Coiled-coil domain-containing protein 64B</fullName>
    </alternativeName>
</protein>
<reference key="1">
    <citation type="submission" date="2006-10" db="EMBL/GenBank/DDBJ databases">
        <authorList>
            <consortium name="NIH - Zebrafish Gene Collection (ZGC) project"/>
        </authorList>
    </citation>
    <scope>NUCLEOTIDE SEQUENCE [LARGE SCALE MRNA]</scope>
</reference>
<keyword id="KW-0175">Coiled coil</keyword>
<keyword id="KW-1185">Reference proteome</keyword>
<accession>A0JMK8</accession>
<proteinExistence type="evidence at transcript level"/>
<sequence length="414" mass="48025">MAPTMGVDDLLASPQDDRSPTLLEKDLILAAEVGQALLEKNEELASQIMQMESEMEAMQQEKHMVQRRLEVRDLEASQREAELQADISALRAQLEQKHIQGRDRRREESEQLIQLSNHNQKLVEQLAEAVSLEHTLRTELRTLREEMEDTSFSKSISSARLDSLQAENRVLKERCTHMDERLKSTQEDNERLRSERDGLRERAIELQTSLKDKETELEQEHSTVFQLRTVNRTLQQRVQALGEEASLGEATCFPLSLQSEIQQCQAKETILAHSSVLREKEEEIQRLQKELQSRETELEGLREEVKLFRNSPGKPTYKALEEEMILARQERDALNQQLLNTIRHKVALSQEVESWQEDMRLVICQQVQLQQQEKEKENNKERTGFQRGTRTTKSLRLRGEEGRKGFFSALFGGD</sequence>
<feature type="chain" id="PRO_0000394264" description="BICD family-like cargo adapter 2">
    <location>
        <begin position="1"/>
        <end position="414"/>
    </location>
</feature>
<feature type="region of interest" description="Disordered" evidence="2">
    <location>
        <begin position="372"/>
        <end position="399"/>
    </location>
</feature>
<feature type="coiled-coil region" evidence="1">
    <location>
        <begin position="34"/>
        <end position="341"/>
    </location>
</feature>
<feature type="compositionally biased region" description="Basic and acidic residues" evidence="2">
    <location>
        <begin position="372"/>
        <end position="384"/>
    </location>
</feature>
<gene>
    <name type="primary">bicdl2</name>
    <name type="synonym">bicdr2</name>
    <name type="synonym">ccdc64b</name>
    <name type="ORF">zgc:153929</name>
</gene>
<organism>
    <name type="scientific">Danio rerio</name>
    <name type="common">Zebrafish</name>
    <name type="synonym">Brachydanio rerio</name>
    <dbReference type="NCBI Taxonomy" id="7955"/>
    <lineage>
        <taxon>Eukaryota</taxon>
        <taxon>Metazoa</taxon>
        <taxon>Chordata</taxon>
        <taxon>Craniata</taxon>
        <taxon>Vertebrata</taxon>
        <taxon>Euteleostomi</taxon>
        <taxon>Actinopterygii</taxon>
        <taxon>Neopterygii</taxon>
        <taxon>Teleostei</taxon>
        <taxon>Ostariophysi</taxon>
        <taxon>Cypriniformes</taxon>
        <taxon>Danionidae</taxon>
        <taxon>Danioninae</taxon>
        <taxon>Danio</taxon>
    </lineage>
</organism>
<evidence type="ECO:0000255" key="1"/>
<evidence type="ECO:0000256" key="2">
    <source>
        <dbReference type="SAM" id="MobiDB-lite"/>
    </source>
</evidence>